<name>BGLM_ASPFC</name>
<proteinExistence type="inferred from homology"/>
<protein>
    <recommendedName>
        <fullName>Probable beta-glucosidase M</fullName>
        <ecNumber>3.2.1.21</ecNumber>
    </recommendedName>
    <alternativeName>
        <fullName>Beta-D-glucoside glucohydrolase M</fullName>
    </alternativeName>
    <alternativeName>
        <fullName>Cellobiase M</fullName>
    </alternativeName>
    <alternativeName>
        <fullName>Gentiobiase M</fullName>
    </alternativeName>
</protein>
<organism>
    <name type="scientific">Aspergillus fumigatus (strain CBS 144.89 / FGSC A1163 / CEA10)</name>
    <name type="common">Neosartorya fumigata</name>
    <dbReference type="NCBI Taxonomy" id="451804"/>
    <lineage>
        <taxon>Eukaryota</taxon>
        <taxon>Fungi</taxon>
        <taxon>Dikarya</taxon>
        <taxon>Ascomycota</taxon>
        <taxon>Pezizomycotina</taxon>
        <taxon>Eurotiomycetes</taxon>
        <taxon>Eurotiomycetidae</taxon>
        <taxon>Eurotiales</taxon>
        <taxon>Aspergillaceae</taxon>
        <taxon>Aspergillus</taxon>
        <taxon>Aspergillus subgen. Fumigati</taxon>
    </lineage>
</organism>
<gene>
    <name type="primary">bglM</name>
    <name type="ORF">AFUB_016780</name>
</gene>
<accession>B0XPB8</accession>
<sequence length="769" mass="82625">MHSNVGLAGLAGLLATASVCLSAPADQNITSDTYFYGQSPPVYPSPEGTGTGSWAAAYAKAKKFVAQLTPEEKVNLTAGTDANNGCSGNIAAIPRLNFPGLCVSDAGNGLRGTDYVSSWPSGLHVGASWNKALARQRAVQMATEFRKKGVNVLLGPVVGPLGRVAEAGRNWEGFSNDPYLSGALVYETVDGAQSVGVATCTKHYILNEQETNRNPGMEDGVEVAAVSSNIDDKTMHELYLWPFQDAVLAGSASIMCSYNRVNNSYGCQNSKTLNGLLKTELGFQGYAMTDWGAQHAGIAGANAGLDMVMPSTETWGANLTTAISNGTMDASRLDDMATRIIASWYQMNQDSDFPSPGAGMPSDMYAPHQRVIGRDASSKQTLLRGAIEGHVLVKNNHSALPLKSPQLLSVFGYDAKGPNALKQNFNWLSYSPAIQENHTLWVGGGSGANNAAYIDAPIDAIQRQAYEDGTSVLYDISSEDPEVDPTTDACLVFINSYATEGWDRPGLADNSSDTLVKNVARKCANTIVTIHNAGIRVVGEWIDHENVTAVIFAHLPGQDSGRALVELLYGRANPSGKLPYTVAKKAEDYGSLLHPSLPETPYGLFPQSDFDEGVYIDYRAFDRANITAQFEFGFGLSYTSFDYSGLQISNPKQSPQYPPSAAIQQGGNPHLWDNIVTVSAEIKNTGRVAGAEVAQLYIGIPNGPVRQLRGFEKVDVSAGETTQVQFALNRRDLSTWDVEAQQWSLQRGTYRVYVGRSSRDLPLTGSFTL</sequence>
<keyword id="KW-0119">Carbohydrate metabolism</keyword>
<keyword id="KW-0136">Cellulose degradation</keyword>
<keyword id="KW-0325">Glycoprotein</keyword>
<keyword id="KW-0326">Glycosidase</keyword>
<keyword id="KW-0378">Hydrolase</keyword>
<keyword id="KW-0624">Polysaccharide degradation</keyword>
<keyword id="KW-0964">Secreted</keyword>
<keyword id="KW-0732">Signal</keyword>
<feature type="signal peptide" evidence="2">
    <location>
        <begin position="1"/>
        <end position="22"/>
    </location>
</feature>
<feature type="chain" id="PRO_0000394904" description="Probable beta-glucosidase M">
    <location>
        <begin position="23"/>
        <end position="769"/>
    </location>
</feature>
<feature type="active site" evidence="1">
    <location>
        <position position="290"/>
    </location>
</feature>
<feature type="glycosylation site" description="N-linked (GlcNAc...) asparagine" evidence="2">
    <location>
        <position position="28"/>
    </location>
</feature>
<feature type="glycosylation site" description="N-linked (GlcNAc...) asparagine" evidence="2">
    <location>
        <position position="75"/>
    </location>
</feature>
<feature type="glycosylation site" description="N-linked (GlcNAc...) asparagine" evidence="2">
    <location>
        <position position="262"/>
    </location>
</feature>
<feature type="glycosylation site" description="N-linked (GlcNAc...) asparagine" evidence="2">
    <location>
        <position position="318"/>
    </location>
</feature>
<feature type="glycosylation site" description="N-linked (GlcNAc...) asparagine" evidence="2">
    <location>
        <position position="325"/>
    </location>
</feature>
<feature type="glycosylation site" description="N-linked (GlcNAc...) asparagine" evidence="2">
    <location>
        <position position="396"/>
    </location>
</feature>
<feature type="glycosylation site" description="N-linked (GlcNAc...) asparagine" evidence="2">
    <location>
        <position position="437"/>
    </location>
</feature>
<feature type="glycosylation site" description="N-linked (GlcNAc...) asparagine" evidence="2">
    <location>
        <position position="510"/>
    </location>
</feature>
<feature type="glycosylation site" description="N-linked (GlcNAc...) asparagine" evidence="2">
    <location>
        <position position="546"/>
    </location>
</feature>
<feature type="glycosylation site" description="N-linked (GlcNAc...) asparagine" evidence="2">
    <location>
        <position position="625"/>
    </location>
</feature>
<evidence type="ECO:0000250" key="1"/>
<evidence type="ECO:0000255" key="2"/>
<evidence type="ECO:0000305" key="3"/>
<comment type="function">
    <text evidence="1">Beta-glucosidases are one of a number of cellulolytic enzymes involved in the degradation of cellulosic biomass. Catalyzes the last step releasing glucose from the inhibitory cellobiose (By similarity).</text>
</comment>
<comment type="catalytic activity">
    <reaction>
        <text>Hydrolysis of terminal, non-reducing beta-D-glucosyl residues with release of beta-D-glucose.</text>
        <dbReference type="EC" id="3.2.1.21"/>
    </reaction>
</comment>
<comment type="pathway">
    <text>Glycan metabolism; cellulose degradation.</text>
</comment>
<comment type="subcellular location">
    <subcellularLocation>
        <location evidence="1">Secreted</location>
    </subcellularLocation>
</comment>
<comment type="similarity">
    <text evidence="3">Belongs to the glycosyl hydrolase 3 family.</text>
</comment>
<reference key="1">
    <citation type="journal article" date="2008" name="PLoS Genet.">
        <title>Genomic islands in the pathogenic filamentous fungus Aspergillus fumigatus.</title>
        <authorList>
            <person name="Fedorova N.D."/>
            <person name="Khaldi N."/>
            <person name="Joardar V.S."/>
            <person name="Maiti R."/>
            <person name="Amedeo P."/>
            <person name="Anderson M.J."/>
            <person name="Crabtree J."/>
            <person name="Silva J.C."/>
            <person name="Badger J.H."/>
            <person name="Albarraq A."/>
            <person name="Angiuoli S."/>
            <person name="Bussey H."/>
            <person name="Bowyer P."/>
            <person name="Cotty P.J."/>
            <person name="Dyer P.S."/>
            <person name="Egan A."/>
            <person name="Galens K."/>
            <person name="Fraser-Liggett C.M."/>
            <person name="Haas B.J."/>
            <person name="Inman J.M."/>
            <person name="Kent R."/>
            <person name="Lemieux S."/>
            <person name="Malavazi I."/>
            <person name="Orvis J."/>
            <person name="Roemer T."/>
            <person name="Ronning C.M."/>
            <person name="Sundaram J.P."/>
            <person name="Sutton G."/>
            <person name="Turner G."/>
            <person name="Venter J.C."/>
            <person name="White O.R."/>
            <person name="Whitty B.R."/>
            <person name="Youngman P."/>
            <person name="Wolfe K.H."/>
            <person name="Goldman G.H."/>
            <person name="Wortman J.R."/>
            <person name="Jiang B."/>
            <person name="Denning D.W."/>
            <person name="Nierman W.C."/>
        </authorList>
    </citation>
    <scope>NUCLEOTIDE SEQUENCE [LARGE SCALE GENOMIC DNA]</scope>
    <source>
        <strain>CBS 144.89 / FGSC A1163 / CEA10</strain>
    </source>
</reference>
<dbReference type="EC" id="3.2.1.21"/>
<dbReference type="EMBL" id="DS499594">
    <property type="protein sequence ID" value="EDP56956.1"/>
    <property type="molecule type" value="Genomic_DNA"/>
</dbReference>
<dbReference type="SMR" id="B0XPB8"/>
<dbReference type="GlyCosmos" id="B0XPB8">
    <property type="glycosylation" value="10 sites, No reported glycans"/>
</dbReference>
<dbReference type="EnsemblFungi" id="EDP56956">
    <property type="protein sequence ID" value="EDP56956"/>
    <property type="gene ID" value="AFUB_016780"/>
</dbReference>
<dbReference type="VEuPathDB" id="FungiDB:AFUB_016780"/>
<dbReference type="HOGENOM" id="CLU_004542_2_1_1"/>
<dbReference type="OrthoDB" id="109113at5052"/>
<dbReference type="PhylomeDB" id="B0XPB8"/>
<dbReference type="UniPathway" id="UPA00696"/>
<dbReference type="Proteomes" id="UP000001699">
    <property type="component" value="Unassembled WGS sequence"/>
</dbReference>
<dbReference type="GO" id="GO:0005576">
    <property type="term" value="C:extracellular region"/>
    <property type="evidence" value="ECO:0007669"/>
    <property type="project" value="UniProtKB-SubCell"/>
</dbReference>
<dbReference type="GO" id="GO:0008422">
    <property type="term" value="F:beta-glucosidase activity"/>
    <property type="evidence" value="ECO:0007669"/>
    <property type="project" value="UniProtKB-EC"/>
</dbReference>
<dbReference type="GO" id="GO:0030245">
    <property type="term" value="P:cellulose catabolic process"/>
    <property type="evidence" value="ECO:0007669"/>
    <property type="project" value="UniProtKB-UniPathway"/>
</dbReference>
<dbReference type="FunFam" id="3.40.50.1700:FF:000008">
    <property type="entry name" value="Beta-glucosidase"/>
    <property type="match status" value="1"/>
</dbReference>
<dbReference type="FunFam" id="2.60.40.10:FF:000757">
    <property type="entry name" value="Beta-glucosidase G"/>
    <property type="match status" value="1"/>
</dbReference>
<dbReference type="FunFam" id="3.20.20.300:FF:000002">
    <property type="entry name" value="Probable beta-glucosidase"/>
    <property type="match status" value="1"/>
</dbReference>
<dbReference type="Gene3D" id="3.40.50.1700">
    <property type="entry name" value="Glycoside hydrolase family 3 C-terminal domain"/>
    <property type="match status" value="1"/>
</dbReference>
<dbReference type="Gene3D" id="3.20.20.300">
    <property type="entry name" value="Glycoside hydrolase, family 3, N-terminal domain"/>
    <property type="match status" value="1"/>
</dbReference>
<dbReference type="Gene3D" id="2.60.40.10">
    <property type="entry name" value="Immunoglobulins"/>
    <property type="match status" value="1"/>
</dbReference>
<dbReference type="InterPro" id="IPR050288">
    <property type="entry name" value="Cellulose_deg_GH3"/>
</dbReference>
<dbReference type="InterPro" id="IPR026891">
    <property type="entry name" value="Fn3-like"/>
</dbReference>
<dbReference type="InterPro" id="IPR002772">
    <property type="entry name" value="Glyco_hydro_3_C"/>
</dbReference>
<dbReference type="InterPro" id="IPR036881">
    <property type="entry name" value="Glyco_hydro_3_C_sf"/>
</dbReference>
<dbReference type="InterPro" id="IPR001764">
    <property type="entry name" value="Glyco_hydro_3_N"/>
</dbReference>
<dbReference type="InterPro" id="IPR036962">
    <property type="entry name" value="Glyco_hydro_3_N_sf"/>
</dbReference>
<dbReference type="InterPro" id="IPR017853">
    <property type="entry name" value="Glycoside_hydrolase_SF"/>
</dbReference>
<dbReference type="InterPro" id="IPR013783">
    <property type="entry name" value="Ig-like_fold"/>
</dbReference>
<dbReference type="PANTHER" id="PTHR42715">
    <property type="entry name" value="BETA-GLUCOSIDASE"/>
    <property type="match status" value="1"/>
</dbReference>
<dbReference type="PANTHER" id="PTHR42715:SF5">
    <property type="entry name" value="BETA-GLUCOSIDASE M-RELATED"/>
    <property type="match status" value="1"/>
</dbReference>
<dbReference type="Pfam" id="PF14310">
    <property type="entry name" value="Fn3-like"/>
    <property type="match status" value="1"/>
</dbReference>
<dbReference type="Pfam" id="PF00933">
    <property type="entry name" value="Glyco_hydro_3"/>
    <property type="match status" value="1"/>
</dbReference>
<dbReference type="Pfam" id="PF01915">
    <property type="entry name" value="Glyco_hydro_3_C"/>
    <property type="match status" value="1"/>
</dbReference>
<dbReference type="PRINTS" id="PR00133">
    <property type="entry name" value="GLHYDRLASE3"/>
</dbReference>
<dbReference type="SMART" id="SM01217">
    <property type="entry name" value="Fn3_like"/>
    <property type="match status" value="1"/>
</dbReference>
<dbReference type="SUPFAM" id="SSF51445">
    <property type="entry name" value="(Trans)glycosidases"/>
    <property type="match status" value="1"/>
</dbReference>
<dbReference type="SUPFAM" id="SSF52279">
    <property type="entry name" value="Beta-D-glucan exohydrolase, C-terminal domain"/>
    <property type="match status" value="1"/>
</dbReference>